<accession>A6LAP3</accession>
<gene>
    <name evidence="1" type="primary">proS</name>
    <name type="ordered locus">BDI_0989</name>
</gene>
<keyword id="KW-0030">Aminoacyl-tRNA synthetase</keyword>
<keyword id="KW-0067">ATP-binding</keyword>
<keyword id="KW-0963">Cytoplasm</keyword>
<keyword id="KW-0436">Ligase</keyword>
<keyword id="KW-0547">Nucleotide-binding</keyword>
<keyword id="KW-0648">Protein biosynthesis</keyword>
<keyword id="KW-1185">Reference proteome</keyword>
<protein>
    <recommendedName>
        <fullName evidence="1">Proline--tRNA ligase</fullName>
        <ecNumber evidence="1">6.1.1.15</ecNumber>
    </recommendedName>
    <alternativeName>
        <fullName evidence="1">Prolyl-tRNA synthetase</fullName>
        <shortName evidence="1">ProRS</shortName>
    </alternativeName>
</protein>
<sequence>MAKELKELTPRSVNYSQWYQDLVIKADLAENSAVRGCMVIKPYGYAIWEKMQRILDDMFKETGHVNAYFPLLIPKSFLSKEAEHVEGFAKECAVVTHYRLKTNHDGTGVVVDPAAKLEEELIIRPTSETIIWNTYRNWIQSYRDLPILCNQWANVMRWEMRTRLFLRTAEFLWQEGHTAHATREEAEIEAKKMQDVYANFAENYMAMPVIKGVKSESERFAGALDTYTIEAMMQDGKALQAGTSHFLGQNFGKAFDVTFIDKNGKSDYAWATSWGVSTRLIGALIMSHSDDNGLVLPPHLAPIQVVIVPIYRSAEQLTQISEKVAGIVAKLKALGISVKYDDADNKKPGWKFAEYELKGVPVRLAMGGRDLENNTIEVMRRDTLEKETITCDGIEEYVKNLLEEIQANIFKKAYDHREANIINVDTYEEFKEKIEDGVFIMAHWDGTPETEELIKNETKATIRCIPLAGDKTPGKCMVTGKPSACRVLFARAY</sequence>
<organism>
    <name type="scientific">Parabacteroides distasonis (strain ATCC 8503 / DSM 20701 / CIP 104284 / JCM 5825 / NCTC 11152)</name>
    <dbReference type="NCBI Taxonomy" id="435591"/>
    <lineage>
        <taxon>Bacteria</taxon>
        <taxon>Pseudomonadati</taxon>
        <taxon>Bacteroidota</taxon>
        <taxon>Bacteroidia</taxon>
        <taxon>Bacteroidales</taxon>
        <taxon>Tannerellaceae</taxon>
        <taxon>Parabacteroides</taxon>
    </lineage>
</organism>
<feature type="chain" id="PRO_1000069193" description="Proline--tRNA ligase">
    <location>
        <begin position="1"/>
        <end position="493"/>
    </location>
</feature>
<comment type="function">
    <text evidence="1">Catalyzes the attachment of proline to tRNA(Pro) in a two-step reaction: proline is first activated by ATP to form Pro-AMP and then transferred to the acceptor end of tRNA(Pro).</text>
</comment>
<comment type="catalytic activity">
    <reaction evidence="1">
        <text>tRNA(Pro) + L-proline + ATP = L-prolyl-tRNA(Pro) + AMP + diphosphate</text>
        <dbReference type="Rhea" id="RHEA:14305"/>
        <dbReference type="Rhea" id="RHEA-COMP:9700"/>
        <dbReference type="Rhea" id="RHEA-COMP:9702"/>
        <dbReference type="ChEBI" id="CHEBI:30616"/>
        <dbReference type="ChEBI" id="CHEBI:33019"/>
        <dbReference type="ChEBI" id="CHEBI:60039"/>
        <dbReference type="ChEBI" id="CHEBI:78442"/>
        <dbReference type="ChEBI" id="CHEBI:78532"/>
        <dbReference type="ChEBI" id="CHEBI:456215"/>
        <dbReference type="EC" id="6.1.1.15"/>
    </reaction>
</comment>
<comment type="subunit">
    <text evidence="1">Homodimer.</text>
</comment>
<comment type="subcellular location">
    <subcellularLocation>
        <location evidence="1">Cytoplasm</location>
    </subcellularLocation>
</comment>
<comment type="domain">
    <text evidence="1">Consists of three domains: the N-terminal catalytic domain, the anticodon-binding domain and the C-terminal extension.</text>
</comment>
<comment type="similarity">
    <text evidence="1">Belongs to the class-II aminoacyl-tRNA synthetase family. ProS type 3 subfamily.</text>
</comment>
<name>SYP_PARD8</name>
<evidence type="ECO:0000255" key="1">
    <source>
        <dbReference type="HAMAP-Rule" id="MF_01571"/>
    </source>
</evidence>
<dbReference type="EC" id="6.1.1.15" evidence="1"/>
<dbReference type="EMBL" id="CP000140">
    <property type="protein sequence ID" value="ABR42757.1"/>
    <property type="molecule type" value="Genomic_DNA"/>
</dbReference>
<dbReference type="RefSeq" id="WP_005862574.1">
    <property type="nucleotide sequence ID" value="NC_009615.1"/>
</dbReference>
<dbReference type="SMR" id="A6LAP3"/>
<dbReference type="STRING" id="435591.BDI_0989"/>
<dbReference type="PaxDb" id="435591-BDI_0989"/>
<dbReference type="KEGG" id="pdi:BDI_0989"/>
<dbReference type="eggNOG" id="COG0442">
    <property type="taxonomic scope" value="Bacteria"/>
</dbReference>
<dbReference type="HOGENOM" id="CLU_001882_4_2_10"/>
<dbReference type="BioCyc" id="PDIS435591:G1G5A-1024-MONOMER"/>
<dbReference type="Proteomes" id="UP000000566">
    <property type="component" value="Chromosome"/>
</dbReference>
<dbReference type="GO" id="GO:0017101">
    <property type="term" value="C:aminoacyl-tRNA synthetase multienzyme complex"/>
    <property type="evidence" value="ECO:0007669"/>
    <property type="project" value="TreeGrafter"/>
</dbReference>
<dbReference type="GO" id="GO:0005737">
    <property type="term" value="C:cytoplasm"/>
    <property type="evidence" value="ECO:0007669"/>
    <property type="project" value="UniProtKB-SubCell"/>
</dbReference>
<dbReference type="GO" id="GO:0005524">
    <property type="term" value="F:ATP binding"/>
    <property type="evidence" value="ECO:0007669"/>
    <property type="project" value="UniProtKB-UniRule"/>
</dbReference>
<dbReference type="GO" id="GO:0004827">
    <property type="term" value="F:proline-tRNA ligase activity"/>
    <property type="evidence" value="ECO:0007669"/>
    <property type="project" value="UniProtKB-UniRule"/>
</dbReference>
<dbReference type="GO" id="GO:0006433">
    <property type="term" value="P:prolyl-tRNA aminoacylation"/>
    <property type="evidence" value="ECO:0007669"/>
    <property type="project" value="UniProtKB-UniRule"/>
</dbReference>
<dbReference type="CDD" id="cd00862">
    <property type="entry name" value="ProRS_anticodon_zinc"/>
    <property type="match status" value="1"/>
</dbReference>
<dbReference type="CDD" id="cd00778">
    <property type="entry name" value="ProRS_core_arch_euk"/>
    <property type="match status" value="1"/>
</dbReference>
<dbReference type="FunFam" id="3.40.50.800:FF:000005">
    <property type="entry name" value="bifunctional glutamate/proline--tRNA ligase"/>
    <property type="match status" value="1"/>
</dbReference>
<dbReference type="FunFam" id="3.30.930.10:FF:000023">
    <property type="entry name" value="Proline--tRNA ligase"/>
    <property type="match status" value="1"/>
</dbReference>
<dbReference type="Gene3D" id="3.40.50.800">
    <property type="entry name" value="Anticodon-binding domain"/>
    <property type="match status" value="1"/>
</dbReference>
<dbReference type="Gene3D" id="3.30.930.10">
    <property type="entry name" value="Bira Bifunctional Protein, Domain 2"/>
    <property type="match status" value="1"/>
</dbReference>
<dbReference type="Gene3D" id="3.30.110.30">
    <property type="entry name" value="C-terminal domain of ProRS"/>
    <property type="match status" value="1"/>
</dbReference>
<dbReference type="HAMAP" id="MF_01571">
    <property type="entry name" value="Pro_tRNA_synth_type3"/>
    <property type="match status" value="1"/>
</dbReference>
<dbReference type="InterPro" id="IPR002314">
    <property type="entry name" value="aa-tRNA-synt_IIb"/>
</dbReference>
<dbReference type="InterPro" id="IPR006195">
    <property type="entry name" value="aa-tRNA-synth_II"/>
</dbReference>
<dbReference type="InterPro" id="IPR045864">
    <property type="entry name" value="aa-tRNA-synth_II/BPL/LPL"/>
</dbReference>
<dbReference type="InterPro" id="IPR004154">
    <property type="entry name" value="Anticodon-bd"/>
</dbReference>
<dbReference type="InterPro" id="IPR036621">
    <property type="entry name" value="Anticodon-bd_dom_sf"/>
</dbReference>
<dbReference type="InterPro" id="IPR004499">
    <property type="entry name" value="Pro-tRNA-ligase_IIa_arc-type"/>
</dbReference>
<dbReference type="InterPro" id="IPR016061">
    <property type="entry name" value="Pro-tRNA_ligase_II_C"/>
</dbReference>
<dbReference type="InterPro" id="IPR017449">
    <property type="entry name" value="Pro-tRNA_synth_II"/>
</dbReference>
<dbReference type="InterPro" id="IPR033721">
    <property type="entry name" value="ProRS_core_arch_euk"/>
</dbReference>
<dbReference type="NCBIfam" id="TIGR00408">
    <property type="entry name" value="proS_fam_I"/>
    <property type="match status" value="1"/>
</dbReference>
<dbReference type="PANTHER" id="PTHR43382:SF2">
    <property type="entry name" value="BIFUNCTIONAL GLUTAMATE_PROLINE--TRNA LIGASE"/>
    <property type="match status" value="1"/>
</dbReference>
<dbReference type="PANTHER" id="PTHR43382">
    <property type="entry name" value="PROLYL-TRNA SYNTHETASE"/>
    <property type="match status" value="1"/>
</dbReference>
<dbReference type="Pfam" id="PF03129">
    <property type="entry name" value="HGTP_anticodon"/>
    <property type="match status" value="1"/>
</dbReference>
<dbReference type="Pfam" id="PF09180">
    <property type="entry name" value="ProRS-C_1"/>
    <property type="match status" value="1"/>
</dbReference>
<dbReference type="Pfam" id="PF00587">
    <property type="entry name" value="tRNA-synt_2b"/>
    <property type="match status" value="1"/>
</dbReference>
<dbReference type="SMART" id="SM00946">
    <property type="entry name" value="ProRS-C_1"/>
    <property type="match status" value="1"/>
</dbReference>
<dbReference type="SUPFAM" id="SSF64586">
    <property type="entry name" value="C-terminal domain of ProRS"/>
    <property type="match status" value="1"/>
</dbReference>
<dbReference type="SUPFAM" id="SSF52954">
    <property type="entry name" value="Class II aaRS ABD-related"/>
    <property type="match status" value="1"/>
</dbReference>
<dbReference type="SUPFAM" id="SSF55681">
    <property type="entry name" value="Class II aaRS and biotin synthetases"/>
    <property type="match status" value="1"/>
</dbReference>
<dbReference type="PROSITE" id="PS50862">
    <property type="entry name" value="AA_TRNA_LIGASE_II"/>
    <property type="match status" value="1"/>
</dbReference>
<reference key="1">
    <citation type="journal article" date="2007" name="PLoS Biol.">
        <title>Evolution of symbiotic bacteria in the distal human intestine.</title>
        <authorList>
            <person name="Xu J."/>
            <person name="Mahowald M.A."/>
            <person name="Ley R.E."/>
            <person name="Lozupone C.A."/>
            <person name="Hamady M."/>
            <person name="Martens E.C."/>
            <person name="Henrissat B."/>
            <person name="Coutinho P.M."/>
            <person name="Minx P."/>
            <person name="Latreille P."/>
            <person name="Cordum H."/>
            <person name="Van Brunt A."/>
            <person name="Kim K."/>
            <person name="Fulton R.S."/>
            <person name="Fulton L.A."/>
            <person name="Clifton S.W."/>
            <person name="Wilson R.K."/>
            <person name="Knight R.D."/>
            <person name="Gordon J.I."/>
        </authorList>
    </citation>
    <scope>NUCLEOTIDE SEQUENCE [LARGE SCALE GENOMIC DNA]</scope>
    <source>
        <strain>ATCC 8503 / DSM 20701 / CIP 104284 / JCM 5825 / NCTC 11152</strain>
    </source>
</reference>
<proteinExistence type="inferred from homology"/>